<name>KCY_SHIF8</name>
<accession>Q0SX05</accession>
<reference key="1">
    <citation type="journal article" date="2006" name="BMC Genomics">
        <title>Complete genome sequence of Shigella flexneri 5b and comparison with Shigella flexneri 2a.</title>
        <authorList>
            <person name="Nie H."/>
            <person name="Yang F."/>
            <person name="Zhang X."/>
            <person name="Yang J."/>
            <person name="Chen L."/>
            <person name="Wang J."/>
            <person name="Xiong Z."/>
            <person name="Peng J."/>
            <person name="Sun L."/>
            <person name="Dong J."/>
            <person name="Xue Y."/>
            <person name="Xu X."/>
            <person name="Chen S."/>
            <person name="Yao Z."/>
            <person name="Shen Y."/>
            <person name="Jin Q."/>
        </authorList>
    </citation>
    <scope>NUCLEOTIDE SEQUENCE [LARGE SCALE GENOMIC DNA]</scope>
    <source>
        <strain>8401</strain>
    </source>
</reference>
<protein>
    <recommendedName>
        <fullName evidence="1">Cytidylate kinase</fullName>
        <shortName evidence="1">CK</shortName>
        <ecNumber evidence="1">2.7.4.25</ecNumber>
    </recommendedName>
    <alternativeName>
        <fullName evidence="1">Cytidine monophosphate kinase</fullName>
        <shortName evidence="1">CMP kinase</shortName>
    </alternativeName>
</protein>
<feature type="chain" id="PRO_1000048284" description="Cytidylate kinase">
    <location>
        <begin position="1"/>
        <end position="227"/>
    </location>
</feature>
<feature type="binding site" evidence="1">
    <location>
        <begin position="12"/>
        <end position="20"/>
    </location>
    <ligand>
        <name>ATP</name>
        <dbReference type="ChEBI" id="CHEBI:30616"/>
    </ligand>
</feature>
<sequence>MTAIAPVITIDGPSGAGKGTLCKAMAEALQWHLLDSGAIYRVLALAALHHHVDVASEDALVPLASHLDVRFVSTNGNLEVILEGEDVSGEIRTQEVANAASQVAAFPRVREALLRRQRAFRELPGLIADGRDMGTVVFPDAPVKIFLDASSEERAHRRMLQLQEKGFSVNFERLLAEIKERDDRDRNRAVAPLVPAADALVLDSTTLSIEQVIEKALQYARQKLALA</sequence>
<keyword id="KW-0067">ATP-binding</keyword>
<keyword id="KW-0963">Cytoplasm</keyword>
<keyword id="KW-0418">Kinase</keyword>
<keyword id="KW-0547">Nucleotide-binding</keyword>
<keyword id="KW-0808">Transferase</keyword>
<comment type="catalytic activity">
    <reaction evidence="1">
        <text>CMP + ATP = CDP + ADP</text>
        <dbReference type="Rhea" id="RHEA:11600"/>
        <dbReference type="ChEBI" id="CHEBI:30616"/>
        <dbReference type="ChEBI" id="CHEBI:58069"/>
        <dbReference type="ChEBI" id="CHEBI:60377"/>
        <dbReference type="ChEBI" id="CHEBI:456216"/>
        <dbReference type="EC" id="2.7.4.25"/>
    </reaction>
</comment>
<comment type="catalytic activity">
    <reaction evidence="1">
        <text>dCMP + ATP = dCDP + ADP</text>
        <dbReference type="Rhea" id="RHEA:25094"/>
        <dbReference type="ChEBI" id="CHEBI:30616"/>
        <dbReference type="ChEBI" id="CHEBI:57566"/>
        <dbReference type="ChEBI" id="CHEBI:58593"/>
        <dbReference type="ChEBI" id="CHEBI:456216"/>
        <dbReference type="EC" id="2.7.4.25"/>
    </reaction>
</comment>
<comment type="subcellular location">
    <subcellularLocation>
        <location evidence="1">Cytoplasm</location>
    </subcellularLocation>
</comment>
<comment type="similarity">
    <text evidence="1">Belongs to the cytidylate kinase family. Type 1 subfamily.</text>
</comment>
<evidence type="ECO:0000255" key="1">
    <source>
        <dbReference type="HAMAP-Rule" id="MF_00238"/>
    </source>
</evidence>
<proteinExistence type="inferred from homology"/>
<organism>
    <name type="scientific">Shigella flexneri serotype 5b (strain 8401)</name>
    <dbReference type="NCBI Taxonomy" id="373384"/>
    <lineage>
        <taxon>Bacteria</taxon>
        <taxon>Pseudomonadati</taxon>
        <taxon>Pseudomonadota</taxon>
        <taxon>Gammaproteobacteria</taxon>
        <taxon>Enterobacterales</taxon>
        <taxon>Enterobacteriaceae</taxon>
        <taxon>Shigella</taxon>
    </lineage>
</organism>
<gene>
    <name evidence="1" type="primary">cmk</name>
    <name type="ordered locus">SFV_0911</name>
</gene>
<dbReference type="EC" id="2.7.4.25" evidence="1"/>
<dbReference type="EMBL" id="CP000266">
    <property type="protein sequence ID" value="ABF03133.1"/>
    <property type="molecule type" value="Genomic_DNA"/>
</dbReference>
<dbReference type="RefSeq" id="WP_000125016.1">
    <property type="nucleotide sequence ID" value="NC_008258.1"/>
</dbReference>
<dbReference type="SMR" id="Q0SX05"/>
<dbReference type="GeneID" id="93776507"/>
<dbReference type="KEGG" id="sfv:SFV_0911"/>
<dbReference type="HOGENOM" id="CLU_079959_0_2_6"/>
<dbReference type="Proteomes" id="UP000000659">
    <property type="component" value="Chromosome"/>
</dbReference>
<dbReference type="GO" id="GO:0005829">
    <property type="term" value="C:cytosol"/>
    <property type="evidence" value="ECO:0007669"/>
    <property type="project" value="TreeGrafter"/>
</dbReference>
<dbReference type="GO" id="GO:0005524">
    <property type="term" value="F:ATP binding"/>
    <property type="evidence" value="ECO:0007669"/>
    <property type="project" value="UniProtKB-UniRule"/>
</dbReference>
<dbReference type="GO" id="GO:0036430">
    <property type="term" value="F:CMP kinase activity"/>
    <property type="evidence" value="ECO:0007669"/>
    <property type="project" value="RHEA"/>
</dbReference>
<dbReference type="GO" id="GO:0036431">
    <property type="term" value="F:dCMP kinase activity"/>
    <property type="evidence" value="ECO:0007669"/>
    <property type="project" value="RHEA"/>
</dbReference>
<dbReference type="GO" id="GO:0015949">
    <property type="term" value="P:nucleobase-containing small molecule interconversion"/>
    <property type="evidence" value="ECO:0007669"/>
    <property type="project" value="TreeGrafter"/>
</dbReference>
<dbReference type="GO" id="GO:0006220">
    <property type="term" value="P:pyrimidine nucleotide metabolic process"/>
    <property type="evidence" value="ECO:0007669"/>
    <property type="project" value="UniProtKB-UniRule"/>
</dbReference>
<dbReference type="CDD" id="cd02020">
    <property type="entry name" value="CMPK"/>
    <property type="match status" value="1"/>
</dbReference>
<dbReference type="FunFam" id="3.40.50.300:FF:000262">
    <property type="entry name" value="Cytidylate kinase"/>
    <property type="match status" value="1"/>
</dbReference>
<dbReference type="Gene3D" id="3.40.50.300">
    <property type="entry name" value="P-loop containing nucleotide triphosphate hydrolases"/>
    <property type="match status" value="1"/>
</dbReference>
<dbReference type="HAMAP" id="MF_00238">
    <property type="entry name" value="Cytidyl_kinase_type1"/>
    <property type="match status" value="1"/>
</dbReference>
<dbReference type="InterPro" id="IPR003136">
    <property type="entry name" value="Cytidylate_kin"/>
</dbReference>
<dbReference type="InterPro" id="IPR011994">
    <property type="entry name" value="Cytidylate_kinase_dom"/>
</dbReference>
<dbReference type="InterPro" id="IPR027417">
    <property type="entry name" value="P-loop_NTPase"/>
</dbReference>
<dbReference type="NCBIfam" id="TIGR00017">
    <property type="entry name" value="cmk"/>
    <property type="match status" value="1"/>
</dbReference>
<dbReference type="PANTHER" id="PTHR21299:SF2">
    <property type="entry name" value="CYTIDYLATE KINASE"/>
    <property type="match status" value="1"/>
</dbReference>
<dbReference type="PANTHER" id="PTHR21299">
    <property type="entry name" value="CYTIDYLATE KINASE/PANTOATE-BETA-ALANINE LIGASE"/>
    <property type="match status" value="1"/>
</dbReference>
<dbReference type="Pfam" id="PF02224">
    <property type="entry name" value="Cytidylate_kin"/>
    <property type="match status" value="1"/>
</dbReference>
<dbReference type="SUPFAM" id="SSF52540">
    <property type="entry name" value="P-loop containing nucleoside triphosphate hydrolases"/>
    <property type="match status" value="1"/>
</dbReference>